<dbReference type="EMBL" id="K01208">
    <property type="status" value="NOT_ANNOTATED_CDS"/>
    <property type="molecule type" value="Genomic_RNA"/>
</dbReference>
<dbReference type="SMR" id="P03392"/>
<dbReference type="GlyCosmos" id="P03392">
    <property type="glycosylation" value="8 sites, No reported glycans"/>
</dbReference>
<dbReference type="GO" id="GO:0020002">
    <property type="term" value="C:host cell plasma membrane"/>
    <property type="evidence" value="ECO:0007669"/>
    <property type="project" value="UniProtKB-SubCell"/>
</dbReference>
<dbReference type="GO" id="GO:0016020">
    <property type="term" value="C:membrane"/>
    <property type="evidence" value="ECO:0007669"/>
    <property type="project" value="UniProtKB-KW"/>
</dbReference>
<dbReference type="GO" id="GO:0019031">
    <property type="term" value="C:viral envelope"/>
    <property type="evidence" value="ECO:0007669"/>
    <property type="project" value="UniProtKB-KW"/>
</dbReference>
<dbReference type="GO" id="GO:0055036">
    <property type="term" value="C:virion membrane"/>
    <property type="evidence" value="ECO:0007669"/>
    <property type="project" value="UniProtKB-SubCell"/>
</dbReference>
<dbReference type="GO" id="GO:0019064">
    <property type="term" value="P:fusion of virus membrane with host plasma membrane"/>
    <property type="evidence" value="ECO:0007669"/>
    <property type="project" value="UniProtKB-KW"/>
</dbReference>
<dbReference type="GO" id="GO:0046718">
    <property type="term" value="P:symbiont entry into host cell"/>
    <property type="evidence" value="ECO:0007669"/>
    <property type="project" value="UniProtKB-KW"/>
</dbReference>
<dbReference type="GO" id="GO:0019062">
    <property type="term" value="P:virion attachment to host cell"/>
    <property type="evidence" value="ECO:0007669"/>
    <property type="project" value="UniProtKB-KW"/>
</dbReference>
<dbReference type="Gene3D" id="1.10.287.210">
    <property type="match status" value="1"/>
</dbReference>
<dbReference type="Gene3D" id="3.90.310.10">
    <property type="entry name" value="ENV polyprotein, receptor-binding domain"/>
    <property type="match status" value="1"/>
</dbReference>
<dbReference type="InterPro" id="IPR008981">
    <property type="entry name" value="FMuLV_rcpt-bd"/>
</dbReference>
<dbReference type="InterPro" id="IPR018154">
    <property type="entry name" value="TLV/ENV_coat_polyprotein"/>
</dbReference>
<dbReference type="PANTHER" id="PTHR10424:SF72">
    <property type="entry name" value="BC035947 PROTEIN-RELATED"/>
    <property type="match status" value="1"/>
</dbReference>
<dbReference type="PANTHER" id="PTHR10424">
    <property type="entry name" value="VIRAL ENVELOPE PROTEIN"/>
    <property type="match status" value="1"/>
</dbReference>
<dbReference type="Pfam" id="PF00429">
    <property type="entry name" value="TLV_coat"/>
    <property type="match status" value="1"/>
</dbReference>
<dbReference type="SUPFAM" id="SSF49830">
    <property type="entry name" value="ENV polyprotein, receptor-binding domain"/>
    <property type="match status" value="1"/>
</dbReference>
<comment type="function">
    <text evidence="1">The surface protein (SU) attaches the virus to the host cell by binding to its receptor. This interaction triggers the refolding of the transmembrane protein (TM) and is thought to activate its fusogenic potential by unmasking its fusion peptide. Fusion occurs at the host cell plasma membrane (By similarity).</text>
</comment>
<comment type="function">
    <text evidence="1">The transmembrane protein (TM) acts as a class I viral fusion protein. Under the current model, the protein has at least 3 conformational states: pre-fusion native state, pre-hairpin intermediate state, and post-fusion hairpin state. During viral and target cell membrane fusion, the coiled coil regions (heptad repeats) assume a trimer-of-hairpins structure, positioning the fusion peptide in close proximity to the C-terminal region of the ectodomain. The formation of this structure appears to drive apposition and subsequent fusion of viral and target cell membranes. Membranes fusion leads to delivery of the nucleocapsid into the cytoplasm (By similarity).</text>
</comment>
<comment type="subunit">
    <text evidence="1">The mature envelope protein (Env) consists of a trimer of SU-TM heterodimers attached by noncovalent interactions or by a labile interchain disulfide bond.</text>
</comment>
<comment type="subcellular location">
    <molecule>Transmembrane protein</molecule>
    <subcellularLocation>
        <location evidence="1">Virion membrane</location>
        <topology evidence="1">Single-pass type I membrane protein</topology>
    </subcellularLocation>
    <subcellularLocation>
        <location evidence="1">Host cell membrane</location>
        <topology evidence="1">Single-pass type I membrane protein</topology>
    </subcellularLocation>
</comment>
<comment type="subcellular location">
    <molecule>Surface protein</molecule>
    <subcellularLocation>
        <location>Virion membrane</location>
        <topology>Peripheral membrane protein</topology>
    </subcellularLocation>
    <subcellularLocation>
        <location evidence="1">Host cell membrane</location>
        <topology evidence="1">Peripheral membrane protein</topology>
    </subcellularLocation>
    <text evidence="1">The surface protein is not anchored to the viral envelope, but associates with the extravirion surface through its binding to TM. Both proteins are thought to be concentrated at the site of budding and incorporated into the virions possibly by contacts between the cytoplasmic tail of Env and the N-terminus of Gag (By similarity).</text>
</comment>
<comment type="PTM">
    <text evidence="1">Specific enzymatic cleavages in vivo yield mature proteins. Envelope glycoproteins are synthesized as an inactive precursor that is N-glycosylated and processed likely by host cell furin or by a furin-like protease in the Golgi to yield the mature SU and TM proteins. The cleavage site between SU and TM requires the minimal sequence [KR]-X-[KR]-R (By similarity).</text>
</comment>
<reference key="1">
    <citation type="journal article" date="1984" name="J. Virol.">
        <title>Nucleotide sequences of the envelope genes of two isolates of feline leukemia virus subgroup B.</title>
        <authorList>
            <person name="Nunberg J.H."/>
            <person name="Williams M.E."/>
            <person name="Innis M.A."/>
        </authorList>
    </citation>
    <scope>NUCLEOTIDE SEQUENCE [GENOMIC RNA]</scope>
</reference>
<protein>
    <recommendedName>
        <fullName>Envelope glycoprotein</fullName>
    </recommendedName>
    <alternativeName>
        <fullName>Env polyprotein</fullName>
    </alternativeName>
    <component>
        <recommendedName>
            <fullName>Surface protein</fullName>
            <shortName>SU</shortName>
        </recommendedName>
        <alternativeName>
            <fullName>Glycoprotein 70</fullName>
            <shortName>gp70</shortName>
        </alternativeName>
    </component>
    <component>
        <recommendedName>
            <fullName>Transmembrane protein</fullName>
            <shortName>TM</shortName>
        </recommendedName>
        <alternativeName>
            <fullName>Envelope protein p15E</fullName>
        </alternativeName>
    </component>
</protein>
<keyword id="KW-0165">Cleavage on pair of basic residues</keyword>
<keyword id="KW-0175">Coiled coil</keyword>
<keyword id="KW-1015">Disulfide bond</keyword>
<keyword id="KW-1169">Fusion of virus membrane with host cell membrane</keyword>
<keyword id="KW-1168">Fusion of virus membrane with host membrane</keyword>
<keyword id="KW-0325">Glycoprotein</keyword>
<keyword id="KW-1032">Host cell membrane</keyword>
<keyword id="KW-1043">Host membrane</keyword>
<keyword id="KW-0945">Host-virus interaction</keyword>
<keyword id="KW-0472">Membrane</keyword>
<keyword id="KW-0732">Signal</keyword>
<keyword id="KW-1161">Viral attachment to host cell</keyword>
<keyword id="KW-0261">Viral envelope protein</keyword>
<keyword id="KW-1162">Viral penetration into host cytoplasm</keyword>
<keyword id="KW-0946">Virion</keyword>
<keyword id="KW-1160">Virus entry into host cell</keyword>
<organism>
    <name type="scientific">Feline sarcoma virus (strain Snyder-Theilen)</name>
    <dbReference type="NCBI Taxonomy" id="11780"/>
    <lineage>
        <taxon>Viruses</taxon>
        <taxon>Riboviria</taxon>
        <taxon>Pararnavirae</taxon>
        <taxon>Artverviricota</taxon>
        <taxon>Revtraviricetes</taxon>
        <taxon>Ortervirales</taxon>
        <taxon>Retroviridae</taxon>
        <taxon>Orthoretrovirinae</taxon>
        <taxon>Gammaretrovirus</taxon>
    </lineage>
</organism>
<sequence>MEGPTHPKPSKDKTFSWDLMILVGVLLRLDVGMANPSPHQIYNVTWTITNLVTGTKANATSMLGTLTDAFPTMYFDLCDIIGNTWNPSDQEPFPGYGCDHPMRRWQQRNTPFYVCPGHANRKQCGGPQDGFCAVWGCETTGETYWRPTSSWDYITVKKGVTQGIYQCSGGGWCGPCYDKAVHSSITGASEGGRCNPLILQFTQKGRQTSWDGPKSWGLRLYRSGYDPIALFSVSRQVMTITPPQAMGPNLVLPDQKPPSRQSQIESRVTPHHSQGNGGTPGITLVNASIAPLSTPVTPASPKRIGTGNRLINLVQGTYLALNVTNPNKTKDCWLCLVSRPPYYEGIAVLGNYSNQTNPPPSCLSDPQHKLTISEVSGQGLCIGTVPKTHQALCKKTQKGHKGTHYLAAPSGTYWACNTGLIPCISMAVLNWTSDFCVLIELWPRVTYHQPEYVYTHFDKTVRLRREPISLTVALMLGGLTVGGIAAGVGTGTKALLETAQFRQLQMAMHTDIQALEESISALEKSLTSLSEVVL</sequence>
<name>ENV_FSVST</name>
<organismHost>
    <name type="scientific">Felidae</name>
    <name type="common">cat family</name>
    <dbReference type="NCBI Taxonomy" id="9681"/>
</organismHost>
<gene>
    <name type="primary">env</name>
</gene>
<feature type="signal peptide" evidence="2">
    <location>
        <begin position="1"/>
        <end position="34"/>
    </location>
</feature>
<feature type="chain" id="PRO_0000239574" description="Envelope glycoprotein">
    <location>
        <begin position="35"/>
        <end position="534" status="greater than"/>
    </location>
</feature>
<feature type="chain" id="PRO_0000040729" description="Surface protein" evidence="1">
    <location>
        <begin position="35"/>
        <end position="465"/>
    </location>
</feature>
<feature type="chain" id="PRO_0000040730" description="Transmembrane protein" evidence="1">
    <location>
        <begin position="466"/>
        <end position="534" status="greater than"/>
    </location>
</feature>
<feature type="topological domain" description="Extracellular" evidence="2">
    <location>
        <begin position="35"/>
        <end position="534" status="greater than"/>
    </location>
</feature>
<feature type="region of interest" description="Disordered" evidence="3">
    <location>
        <begin position="245"/>
        <end position="279"/>
    </location>
</feature>
<feature type="region of interest" description="Fusion peptide" evidence="2">
    <location>
        <begin position="468"/>
        <end position="488"/>
    </location>
</feature>
<feature type="coiled-coil region" evidence="2">
    <location>
        <begin position="496"/>
        <end position="534" status="greater than"/>
    </location>
</feature>
<feature type="short sequence motif" description="CXXC">
    <location>
        <begin position="332"/>
        <end position="335"/>
    </location>
</feature>
<feature type="compositionally biased region" description="Polar residues" evidence="3">
    <location>
        <begin position="258"/>
        <end position="274"/>
    </location>
</feature>
<feature type="site" description="Cleavage; by host" evidence="1">
    <location>
        <begin position="465"/>
        <end position="466"/>
    </location>
</feature>
<feature type="glycosylation site" description="N-linked (GlcNAc...) asparagine; by host" evidence="2">
    <location>
        <position position="43"/>
    </location>
</feature>
<feature type="glycosylation site" description="N-linked (GlcNAc...) asparagine; by host" evidence="2">
    <location>
        <position position="58"/>
    </location>
</feature>
<feature type="glycosylation site" description="N-linked (GlcNAc...) asparagine; by host" evidence="2">
    <location>
        <position position="286"/>
    </location>
</feature>
<feature type="glycosylation site" description="N-linked (GlcNAc...) asparagine; by host" evidence="2">
    <location>
        <position position="322"/>
    </location>
</feature>
<feature type="glycosylation site" description="N-linked (GlcNAc...) asparagine; by host" evidence="2">
    <location>
        <position position="327"/>
    </location>
</feature>
<feature type="glycosylation site" description="N-linked (GlcNAc...) asparagine; by host" evidence="2">
    <location>
        <position position="351"/>
    </location>
</feature>
<feature type="glycosylation site" description="N-linked (GlcNAc...) asparagine; by host" evidence="2">
    <location>
        <position position="354"/>
    </location>
</feature>
<feature type="glycosylation site" description="N-linked (GlcNAc...) asparagine; by host" evidence="2">
    <location>
        <position position="430"/>
    </location>
</feature>
<feature type="disulfide bond" evidence="1">
    <location>
        <begin position="115"/>
        <end position="132"/>
    </location>
</feature>
<feature type="disulfide bond" evidence="1">
    <location>
        <begin position="124"/>
        <end position="137"/>
    </location>
</feature>
<feature type="non-terminal residue">
    <location>
        <position position="534"/>
    </location>
</feature>
<evidence type="ECO:0000250" key="1"/>
<evidence type="ECO:0000255" key="2"/>
<evidence type="ECO:0000256" key="3">
    <source>
        <dbReference type="SAM" id="MobiDB-lite"/>
    </source>
</evidence>
<proteinExistence type="inferred from homology"/>
<accession>P03392</accession>